<accession>Q1GP95</accession>
<reference key="1">
    <citation type="journal article" date="2009" name="Proc. Natl. Acad. Sci. U.S.A.">
        <title>The genomic basis of trophic strategy in marine bacteria.</title>
        <authorList>
            <person name="Lauro F.M."/>
            <person name="McDougald D."/>
            <person name="Thomas T."/>
            <person name="Williams T.J."/>
            <person name="Egan S."/>
            <person name="Rice S."/>
            <person name="DeMaere M.Z."/>
            <person name="Ting L."/>
            <person name="Ertan H."/>
            <person name="Johnson J."/>
            <person name="Ferriera S."/>
            <person name="Lapidus A."/>
            <person name="Anderson I."/>
            <person name="Kyrpides N."/>
            <person name="Munk A.C."/>
            <person name="Detter C."/>
            <person name="Han C.S."/>
            <person name="Brown M.V."/>
            <person name="Robb F.T."/>
            <person name="Kjelleberg S."/>
            <person name="Cavicchioli R."/>
        </authorList>
    </citation>
    <scope>NUCLEOTIDE SEQUENCE [LARGE SCALE GENOMIC DNA]</scope>
    <source>
        <strain>DSM 13593 / LMG 18877 / RB2256</strain>
    </source>
</reference>
<organism>
    <name type="scientific">Sphingopyxis alaskensis (strain DSM 13593 / LMG 18877 / RB2256)</name>
    <name type="common">Sphingomonas alaskensis</name>
    <dbReference type="NCBI Taxonomy" id="317655"/>
    <lineage>
        <taxon>Bacteria</taxon>
        <taxon>Pseudomonadati</taxon>
        <taxon>Pseudomonadota</taxon>
        <taxon>Alphaproteobacteria</taxon>
        <taxon>Sphingomonadales</taxon>
        <taxon>Sphingomonadaceae</taxon>
        <taxon>Sphingopyxis</taxon>
    </lineage>
</organism>
<sequence length="156" mass="17694">MARRRRPERREILPDPRFGDVVLSKFMNSVMLDGKKSVAESIVYGALEAVEARAKKEPLGVFHEALANIRPNIEVRSRRVGGATYQVPVEVRPDRAQALAIRWLITAARNRSETTMAARLSGELLDASNNRGNAVKKREDTHRMAEANRAFSHYRW</sequence>
<proteinExistence type="inferred from homology"/>
<comment type="function">
    <text evidence="1">One of the primary rRNA binding proteins, it binds directly to 16S rRNA where it nucleates assembly of the head domain of the 30S subunit. Is located at the subunit interface close to the decoding center, probably blocks exit of the E-site tRNA.</text>
</comment>
<comment type="subunit">
    <text evidence="1">Part of the 30S ribosomal subunit. Contacts proteins S9 and S11.</text>
</comment>
<comment type="similarity">
    <text evidence="1">Belongs to the universal ribosomal protein uS7 family.</text>
</comment>
<evidence type="ECO:0000255" key="1">
    <source>
        <dbReference type="HAMAP-Rule" id="MF_00480"/>
    </source>
</evidence>
<evidence type="ECO:0000305" key="2"/>
<name>RS7_SPHAL</name>
<protein>
    <recommendedName>
        <fullName evidence="1">Small ribosomal subunit protein uS7</fullName>
    </recommendedName>
    <alternativeName>
        <fullName evidence="2">30S ribosomal protein S7</fullName>
    </alternativeName>
</protein>
<feature type="chain" id="PRO_1000014295" description="Small ribosomal subunit protein uS7">
    <location>
        <begin position="1"/>
        <end position="156"/>
    </location>
</feature>
<dbReference type="EMBL" id="CP000356">
    <property type="protein sequence ID" value="ABF54527.1"/>
    <property type="molecule type" value="Genomic_DNA"/>
</dbReference>
<dbReference type="RefSeq" id="WP_003042192.1">
    <property type="nucleotide sequence ID" value="NC_008048.1"/>
</dbReference>
<dbReference type="SMR" id="Q1GP95"/>
<dbReference type="STRING" id="317655.Sala_2822"/>
<dbReference type="KEGG" id="sal:Sala_2822"/>
<dbReference type="eggNOG" id="COG0049">
    <property type="taxonomic scope" value="Bacteria"/>
</dbReference>
<dbReference type="HOGENOM" id="CLU_072226_1_1_5"/>
<dbReference type="OrthoDB" id="9807653at2"/>
<dbReference type="Proteomes" id="UP000006578">
    <property type="component" value="Chromosome"/>
</dbReference>
<dbReference type="GO" id="GO:0015935">
    <property type="term" value="C:small ribosomal subunit"/>
    <property type="evidence" value="ECO:0007669"/>
    <property type="project" value="InterPro"/>
</dbReference>
<dbReference type="GO" id="GO:0019843">
    <property type="term" value="F:rRNA binding"/>
    <property type="evidence" value="ECO:0007669"/>
    <property type="project" value="UniProtKB-UniRule"/>
</dbReference>
<dbReference type="GO" id="GO:0003735">
    <property type="term" value="F:structural constituent of ribosome"/>
    <property type="evidence" value="ECO:0007669"/>
    <property type="project" value="InterPro"/>
</dbReference>
<dbReference type="GO" id="GO:0000049">
    <property type="term" value="F:tRNA binding"/>
    <property type="evidence" value="ECO:0007669"/>
    <property type="project" value="UniProtKB-UniRule"/>
</dbReference>
<dbReference type="GO" id="GO:0006412">
    <property type="term" value="P:translation"/>
    <property type="evidence" value="ECO:0007669"/>
    <property type="project" value="UniProtKB-UniRule"/>
</dbReference>
<dbReference type="CDD" id="cd14869">
    <property type="entry name" value="uS7_Bacteria"/>
    <property type="match status" value="1"/>
</dbReference>
<dbReference type="FunFam" id="1.10.455.10:FF:000001">
    <property type="entry name" value="30S ribosomal protein S7"/>
    <property type="match status" value="1"/>
</dbReference>
<dbReference type="Gene3D" id="1.10.455.10">
    <property type="entry name" value="Ribosomal protein S7 domain"/>
    <property type="match status" value="1"/>
</dbReference>
<dbReference type="HAMAP" id="MF_00480_B">
    <property type="entry name" value="Ribosomal_uS7_B"/>
    <property type="match status" value="1"/>
</dbReference>
<dbReference type="InterPro" id="IPR000235">
    <property type="entry name" value="Ribosomal_uS7"/>
</dbReference>
<dbReference type="InterPro" id="IPR005717">
    <property type="entry name" value="Ribosomal_uS7_bac/org-type"/>
</dbReference>
<dbReference type="InterPro" id="IPR020606">
    <property type="entry name" value="Ribosomal_uS7_CS"/>
</dbReference>
<dbReference type="InterPro" id="IPR023798">
    <property type="entry name" value="Ribosomal_uS7_dom"/>
</dbReference>
<dbReference type="InterPro" id="IPR036823">
    <property type="entry name" value="Ribosomal_uS7_dom_sf"/>
</dbReference>
<dbReference type="NCBIfam" id="TIGR01029">
    <property type="entry name" value="rpsG_bact"/>
    <property type="match status" value="1"/>
</dbReference>
<dbReference type="PANTHER" id="PTHR11205">
    <property type="entry name" value="RIBOSOMAL PROTEIN S7"/>
    <property type="match status" value="1"/>
</dbReference>
<dbReference type="Pfam" id="PF00177">
    <property type="entry name" value="Ribosomal_S7"/>
    <property type="match status" value="1"/>
</dbReference>
<dbReference type="PIRSF" id="PIRSF002122">
    <property type="entry name" value="RPS7p_RPS7a_RPS5e_RPS7o"/>
    <property type="match status" value="1"/>
</dbReference>
<dbReference type="SUPFAM" id="SSF47973">
    <property type="entry name" value="Ribosomal protein S7"/>
    <property type="match status" value="1"/>
</dbReference>
<dbReference type="PROSITE" id="PS00052">
    <property type="entry name" value="RIBOSOMAL_S7"/>
    <property type="match status" value="1"/>
</dbReference>
<keyword id="KW-1185">Reference proteome</keyword>
<keyword id="KW-0687">Ribonucleoprotein</keyword>
<keyword id="KW-0689">Ribosomal protein</keyword>
<keyword id="KW-0694">RNA-binding</keyword>
<keyword id="KW-0699">rRNA-binding</keyword>
<keyword id="KW-0820">tRNA-binding</keyword>
<gene>
    <name evidence="1" type="primary">rpsG</name>
    <name type="ordered locus">Sala_2822</name>
</gene>